<name>GDI2_ARATH</name>
<sequence length="444" mass="49539">MDEEYEVIVLGTGLKECILSGLLSVDGVKVLHMDRNDYYGGESTSLNLNQLWKKFRGEEKAPEHLGASRDYNVDMMPKFMMGNGKLVRTLIHTDVTKYLSFKAVDGSYVFVKGKVQKVPATPMEALKSSLMGIFEKRRAGKFFSFVQEYDEKDPKTHDGMDLTRVTTKELIAKYGLDGNTIDFIGHAVALHTNDQHLDQPAFDTVMRMKLYAESLARFQGTSPYIYPLYGLGELPQAFARLSAVYGGTYMLNKPECKVEFDEGGKVIGVTSEGETAKCKKIVCDPSYLPNKVRKIGRVARAIAIMSHPIPNTNDSHSVQVIIPQKQLARKSDMYVFCCSYSHNVAPKGKFIAFVSTDAETDNPQTELKPGTDLLGPVDEIFFDMYDRYEPVNEPELDNCFISTSYDATTHFETTVADVLNMYTLITGKQLDLSVDLSAASAAEE</sequence>
<keyword id="KW-0343">GTPase activation</keyword>
<keyword id="KW-1185">Reference proteome</keyword>
<organism>
    <name type="scientific">Arabidopsis thaliana</name>
    <name type="common">Mouse-ear cress</name>
    <dbReference type="NCBI Taxonomy" id="3702"/>
    <lineage>
        <taxon>Eukaryota</taxon>
        <taxon>Viridiplantae</taxon>
        <taxon>Streptophyta</taxon>
        <taxon>Embryophyta</taxon>
        <taxon>Tracheophyta</taxon>
        <taxon>Spermatophyta</taxon>
        <taxon>Magnoliopsida</taxon>
        <taxon>eudicotyledons</taxon>
        <taxon>Gunneridae</taxon>
        <taxon>Pentapetalae</taxon>
        <taxon>rosids</taxon>
        <taxon>malvids</taxon>
        <taxon>Brassicales</taxon>
        <taxon>Brassicaceae</taxon>
        <taxon>Camelineae</taxon>
        <taxon>Arabidopsis</taxon>
    </lineage>
</organism>
<comment type="function">
    <text evidence="1">Regulates the GDP/GTP exchange reaction of most RAB proteins by inhibiting the dissociation of GDP from them, and the subsequent binding of GTP.</text>
</comment>
<comment type="tissue specificity">
    <text evidence="1">Expressed in roots and floral buds.</text>
</comment>
<comment type="similarity">
    <text evidence="2">Belongs to the Rab GDI family.</text>
</comment>
<proteinExistence type="evidence at transcript level"/>
<protein>
    <recommendedName>
        <fullName>Guanosine nucleotide diphosphate dissociation inhibitor 2</fullName>
        <shortName>AtGDI2</shortName>
    </recommendedName>
</protein>
<gene>
    <name type="primary">GDI2</name>
    <name type="ordered locus">At3g59920</name>
    <name type="ORF">F24G16.190</name>
</gene>
<accession>O24653</accession>
<evidence type="ECO:0000269" key="1">
    <source>
    </source>
</evidence>
<evidence type="ECO:0000305" key="2"/>
<reference key="1">
    <citation type="journal article" date="1994" name="Plant Physiol.">
        <title>Genes galore: a summary of methods for accessing results from large-scale partial sequencing of anonymous Arabidopsis cDNA clones.</title>
        <authorList>
            <person name="Newman T."/>
            <person name="de Bruijn F.J."/>
            <person name="Green P."/>
            <person name="Keegstra K."/>
            <person name="Kende H."/>
            <person name="Mclntosh L."/>
            <person name="Ohlrogge J."/>
            <person name="Raikhel N."/>
            <person name="Somerville S."/>
            <person name="Thomashow M."/>
            <person name="Retzel E."/>
            <person name="Somerville C."/>
        </authorList>
    </citation>
    <scope>NUCLEOTIDE SEQUENCE [MRNA]</scope>
    <source>
        <strain>cv. Columbia</strain>
    </source>
</reference>
<reference key="2">
    <citation type="journal article" date="1998" name="Gene">
        <title>AtGDI2, a novel Arabidopsis gene encoding a Rab GDP dissociation inhibitor.</title>
        <authorList>
            <person name="Ueda T."/>
            <person name="Yoshizumi T."/>
            <person name="Anai T."/>
            <person name="Matsui M."/>
            <person name="Uchimiya H."/>
            <person name="Nakano A."/>
        </authorList>
    </citation>
    <scope>NUCLEOTIDE SEQUENCE [MRNA]</scope>
    <scope>FUNCTION</scope>
    <scope>TISSUE SPECIFICITY</scope>
</reference>
<reference key="3">
    <citation type="journal article" date="2000" name="Nature">
        <title>Sequence and analysis of chromosome 3 of the plant Arabidopsis thaliana.</title>
        <authorList>
            <person name="Salanoubat M."/>
            <person name="Lemcke K."/>
            <person name="Rieger M."/>
            <person name="Ansorge W."/>
            <person name="Unseld M."/>
            <person name="Fartmann B."/>
            <person name="Valle G."/>
            <person name="Bloecker H."/>
            <person name="Perez-Alonso M."/>
            <person name="Obermaier B."/>
            <person name="Delseny M."/>
            <person name="Boutry M."/>
            <person name="Grivell L.A."/>
            <person name="Mache R."/>
            <person name="Puigdomenech P."/>
            <person name="De Simone V."/>
            <person name="Choisne N."/>
            <person name="Artiguenave F."/>
            <person name="Robert C."/>
            <person name="Brottier P."/>
            <person name="Wincker P."/>
            <person name="Cattolico L."/>
            <person name="Weissenbach J."/>
            <person name="Saurin W."/>
            <person name="Quetier F."/>
            <person name="Schaefer M."/>
            <person name="Mueller-Auer S."/>
            <person name="Gabel C."/>
            <person name="Fuchs M."/>
            <person name="Benes V."/>
            <person name="Wurmbach E."/>
            <person name="Drzonek H."/>
            <person name="Erfle H."/>
            <person name="Jordan N."/>
            <person name="Bangert S."/>
            <person name="Wiedelmann R."/>
            <person name="Kranz H."/>
            <person name="Voss H."/>
            <person name="Holland R."/>
            <person name="Brandt P."/>
            <person name="Nyakatura G."/>
            <person name="Vezzi A."/>
            <person name="D'Angelo M."/>
            <person name="Pallavicini A."/>
            <person name="Toppo S."/>
            <person name="Simionati B."/>
            <person name="Conrad A."/>
            <person name="Hornischer K."/>
            <person name="Kauer G."/>
            <person name="Loehnert T.-H."/>
            <person name="Nordsiek G."/>
            <person name="Reichelt J."/>
            <person name="Scharfe M."/>
            <person name="Schoen O."/>
            <person name="Bargues M."/>
            <person name="Terol J."/>
            <person name="Climent J."/>
            <person name="Navarro P."/>
            <person name="Collado C."/>
            <person name="Perez-Perez A."/>
            <person name="Ottenwaelder B."/>
            <person name="Duchemin D."/>
            <person name="Cooke R."/>
            <person name="Laudie M."/>
            <person name="Berger-Llauro C."/>
            <person name="Purnelle B."/>
            <person name="Masuy D."/>
            <person name="de Haan M."/>
            <person name="Maarse A.C."/>
            <person name="Alcaraz J.-P."/>
            <person name="Cottet A."/>
            <person name="Casacuberta E."/>
            <person name="Monfort A."/>
            <person name="Argiriou A."/>
            <person name="Flores M."/>
            <person name="Liguori R."/>
            <person name="Vitale D."/>
            <person name="Mannhaupt G."/>
            <person name="Haase D."/>
            <person name="Schoof H."/>
            <person name="Rudd S."/>
            <person name="Zaccaria P."/>
            <person name="Mewes H.-W."/>
            <person name="Mayer K.F.X."/>
            <person name="Kaul S."/>
            <person name="Town C.D."/>
            <person name="Koo H.L."/>
            <person name="Tallon L.J."/>
            <person name="Jenkins J."/>
            <person name="Rooney T."/>
            <person name="Rizzo M."/>
            <person name="Walts A."/>
            <person name="Utterback T."/>
            <person name="Fujii C.Y."/>
            <person name="Shea T.P."/>
            <person name="Creasy T.H."/>
            <person name="Haas B."/>
            <person name="Maiti R."/>
            <person name="Wu D."/>
            <person name="Peterson J."/>
            <person name="Van Aken S."/>
            <person name="Pai G."/>
            <person name="Militscher J."/>
            <person name="Sellers P."/>
            <person name="Gill J.E."/>
            <person name="Feldblyum T.V."/>
            <person name="Preuss D."/>
            <person name="Lin X."/>
            <person name="Nierman W.C."/>
            <person name="Salzberg S.L."/>
            <person name="White O."/>
            <person name="Venter J.C."/>
            <person name="Fraser C.M."/>
            <person name="Kaneko T."/>
            <person name="Nakamura Y."/>
            <person name="Sato S."/>
            <person name="Kato T."/>
            <person name="Asamizu E."/>
            <person name="Sasamoto S."/>
            <person name="Kimura T."/>
            <person name="Idesawa K."/>
            <person name="Kawashima K."/>
            <person name="Kishida Y."/>
            <person name="Kiyokawa C."/>
            <person name="Kohara M."/>
            <person name="Matsumoto M."/>
            <person name="Matsuno A."/>
            <person name="Muraki A."/>
            <person name="Nakayama S."/>
            <person name="Nakazaki N."/>
            <person name="Shinpo S."/>
            <person name="Takeuchi C."/>
            <person name="Wada T."/>
            <person name="Watanabe A."/>
            <person name="Yamada M."/>
            <person name="Yasuda M."/>
            <person name="Tabata S."/>
        </authorList>
    </citation>
    <scope>NUCLEOTIDE SEQUENCE [LARGE SCALE GENOMIC DNA]</scope>
    <source>
        <strain>cv. Columbia</strain>
    </source>
</reference>
<reference key="4">
    <citation type="journal article" date="2017" name="Plant J.">
        <title>Araport11: a complete reannotation of the Arabidopsis thaliana reference genome.</title>
        <authorList>
            <person name="Cheng C.Y."/>
            <person name="Krishnakumar V."/>
            <person name="Chan A.P."/>
            <person name="Thibaud-Nissen F."/>
            <person name="Schobel S."/>
            <person name="Town C.D."/>
        </authorList>
    </citation>
    <scope>GENOME REANNOTATION</scope>
    <source>
        <strain>cv. Columbia</strain>
    </source>
</reference>
<reference key="5">
    <citation type="journal article" date="2003" name="Science">
        <title>Empirical analysis of transcriptional activity in the Arabidopsis genome.</title>
        <authorList>
            <person name="Yamada K."/>
            <person name="Lim J."/>
            <person name="Dale J.M."/>
            <person name="Chen H."/>
            <person name="Shinn P."/>
            <person name="Palm C.J."/>
            <person name="Southwick A.M."/>
            <person name="Wu H.C."/>
            <person name="Kim C.J."/>
            <person name="Nguyen M."/>
            <person name="Pham P.K."/>
            <person name="Cheuk R.F."/>
            <person name="Karlin-Newmann G."/>
            <person name="Liu S.X."/>
            <person name="Lam B."/>
            <person name="Sakano H."/>
            <person name="Wu T."/>
            <person name="Yu G."/>
            <person name="Miranda M."/>
            <person name="Quach H.L."/>
            <person name="Tripp M."/>
            <person name="Chang C.H."/>
            <person name="Lee J.M."/>
            <person name="Toriumi M.J."/>
            <person name="Chan M.M."/>
            <person name="Tang C.C."/>
            <person name="Onodera C.S."/>
            <person name="Deng J.M."/>
            <person name="Akiyama K."/>
            <person name="Ansari Y."/>
            <person name="Arakawa T."/>
            <person name="Banh J."/>
            <person name="Banno F."/>
            <person name="Bowser L."/>
            <person name="Brooks S.Y."/>
            <person name="Carninci P."/>
            <person name="Chao Q."/>
            <person name="Choy N."/>
            <person name="Enju A."/>
            <person name="Goldsmith A.D."/>
            <person name="Gurjal M."/>
            <person name="Hansen N.F."/>
            <person name="Hayashizaki Y."/>
            <person name="Johnson-Hopson C."/>
            <person name="Hsuan V.W."/>
            <person name="Iida K."/>
            <person name="Karnes M."/>
            <person name="Khan S."/>
            <person name="Koesema E."/>
            <person name="Ishida J."/>
            <person name="Jiang P.X."/>
            <person name="Jones T."/>
            <person name="Kawai J."/>
            <person name="Kamiya A."/>
            <person name="Meyers C."/>
            <person name="Nakajima M."/>
            <person name="Narusaka M."/>
            <person name="Seki M."/>
            <person name="Sakurai T."/>
            <person name="Satou M."/>
            <person name="Tamse R."/>
            <person name="Vaysberg M."/>
            <person name="Wallender E.K."/>
            <person name="Wong C."/>
            <person name="Yamamura Y."/>
            <person name="Yuan S."/>
            <person name="Shinozaki K."/>
            <person name="Davis R.W."/>
            <person name="Theologis A."/>
            <person name="Ecker J.R."/>
        </authorList>
    </citation>
    <scope>NUCLEOTIDE SEQUENCE [LARGE SCALE MRNA]</scope>
    <source>
        <strain>cv. Columbia</strain>
    </source>
</reference>
<feature type="chain" id="PRO_0000425808" description="Guanosine nucleotide diphosphate dissociation inhibitor 2">
    <location>
        <begin position="1"/>
        <end position="444"/>
    </location>
</feature>
<dbReference type="EMBL" id="AJ001397">
    <property type="protein sequence ID" value="CAA04727.1"/>
    <property type="molecule type" value="mRNA"/>
</dbReference>
<dbReference type="EMBL" id="AB005560">
    <property type="protein sequence ID" value="BAA22504.1"/>
    <property type="molecule type" value="mRNA"/>
</dbReference>
<dbReference type="EMBL" id="AL138647">
    <property type="protein sequence ID" value="CAB75811.1"/>
    <property type="molecule type" value="Genomic_DNA"/>
</dbReference>
<dbReference type="EMBL" id="CP002686">
    <property type="protein sequence ID" value="AEE79985.1"/>
    <property type="molecule type" value="Genomic_DNA"/>
</dbReference>
<dbReference type="EMBL" id="AY081269">
    <property type="protein sequence ID" value="AAL91158.1"/>
    <property type="molecule type" value="mRNA"/>
</dbReference>
<dbReference type="EMBL" id="BT000011">
    <property type="protein sequence ID" value="AAN15330.1"/>
    <property type="molecule type" value="mRNA"/>
</dbReference>
<dbReference type="PIR" id="T47816">
    <property type="entry name" value="T47816"/>
</dbReference>
<dbReference type="RefSeq" id="NP_191551.1">
    <property type="nucleotide sequence ID" value="NM_115855.4"/>
</dbReference>
<dbReference type="SMR" id="O24653"/>
<dbReference type="BioGRID" id="10476">
    <property type="interactions" value="4"/>
</dbReference>
<dbReference type="FunCoup" id="O24653">
    <property type="interactions" value="4434"/>
</dbReference>
<dbReference type="IntAct" id="O24653">
    <property type="interactions" value="3"/>
</dbReference>
<dbReference type="STRING" id="3702.O24653"/>
<dbReference type="iPTMnet" id="O24653"/>
<dbReference type="PaxDb" id="3702-AT3G59920.1"/>
<dbReference type="ProteomicsDB" id="224746"/>
<dbReference type="EnsemblPlants" id="AT3G59920.1">
    <property type="protein sequence ID" value="AT3G59920.1"/>
    <property type="gene ID" value="AT3G59920"/>
</dbReference>
<dbReference type="GeneID" id="825162"/>
<dbReference type="Gramene" id="AT3G59920.1">
    <property type="protein sequence ID" value="AT3G59920.1"/>
    <property type="gene ID" value="AT3G59920"/>
</dbReference>
<dbReference type="KEGG" id="ath:AT3G59920"/>
<dbReference type="Araport" id="AT3G59920"/>
<dbReference type="TAIR" id="AT3G59920">
    <property type="gene designation" value="GDI2"/>
</dbReference>
<dbReference type="eggNOG" id="KOG1439">
    <property type="taxonomic scope" value="Eukaryota"/>
</dbReference>
<dbReference type="HOGENOM" id="CLU_021695_0_0_1"/>
<dbReference type="InParanoid" id="O24653"/>
<dbReference type="OMA" id="AHMVCAK"/>
<dbReference type="OrthoDB" id="9446342at2759"/>
<dbReference type="PhylomeDB" id="O24653"/>
<dbReference type="PRO" id="PR:O24653"/>
<dbReference type="Proteomes" id="UP000006548">
    <property type="component" value="Chromosome 3"/>
</dbReference>
<dbReference type="ExpressionAtlas" id="O24653">
    <property type="expression patterns" value="baseline and differential"/>
</dbReference>
<dbReference type="GO" id="GO:0048046">
    <property type="term" value="C:apoplast"/>
    <property type="evidence" value="ECO:0000314"/>
    <property type="project" value="TAIR"/>
</dbReference>
<dbReference type="GO" id="GO:0005829">
    <property type="term" value="C:cytosol"/>
    <property type="evidence" value="ECO:0007005"/>
    <property type="project" value="TAIR"/>
</dbReference>
<dbReference type="GO" id="GO:0009506">
    <property type="term" value="C:plasmodesma"/>
    <property type="evidence" value="ECO:0007005"/>
    <property type="project" value="TAIR"/>
</dbReference>
<dbReference type="GO" id="GO:0005096">
    <property type="term" value="F:GTPase activator activity"/>
    <property type="evidence" value="ECO:0007669"/>
    <property type="project" value="UniProtKB-KW"/>
</dbReference>
<dbReference type="GO" id="GO:0005093">
    <property type="term" value="F:Rab GDP-dissociation inhibitor activity"/>
    <property type="evidence" value="ECO:0000316"/>
    <property type="project" value="UniProtKB"/>
</dbReference>
<dbReference type="GO" id="GO:0015031">
    <property type="term" value="P:protein transport"/>
    <property type="evidence" value="ECO:0007669"/>
    <property type="project" value="InterPro"/>
</dbReference>
<dbReference type="GO" id="GO:0007264">
    <property type="term" value="P:small GTPase-mediated signal transduction"/>
    <property type="evidence" value="ECO:0007669"/>
    <property type="project" value="InterPro"/>
</dbReference>
<dbReference type="FunFam" id="1.10.405.10:FF:000002">
    <property type="entry name" value="Guanosine nucleotide diphosphate dissociation inhibitor"/>
    <property type="match status" value="1"/>
</dbReference>
<dbReference type="FunFam" id="3.30.519.10:FF:000015">
    <property type="entry name" value="Guanosine nucleotide diphosphate dissociation inhibitor"/>
    <property type="match status" value="1"/>
</dbReference>
<dbReference type="FunFam" id="3.50.50.60:FF:000587">
    <property type="entry name" value="Guanosine nucleotide diphosphate dissociation inhibitor"/>
    <property type="match status" value="1"/>
</dbReference>
<dbReference type="Gene3D" id="3.50.50.60">
    <property type="entry name" value="FAD/NAD(P)-binding domain"/>
    <property type="match status" value="1"/>
</dbReference>
<dbReference type="Gene3D" id="1.10.405.10">
    <property type="entry name" value="Guanine Nucleotide Dissociation Inhibitor, domain 1"/>
    <property type="match status" value="1"/>
</dbReference>
<dbReference type="Gene3D" id="3.30.519.10">
    <property type="entry name" value="Guanine Nucleotide Dissociation Inhibitor, domain 2"/>
    <property type="match status" value="1"/>
</dbReference>
<dbReference type="InterPro" id="IPR036188">
    <property type="entry name" value="FAD/NAD-bd_sf"/>
</dbReference>
<dbReference type="InterPro" id="IPR018203">
    <property type="entry name" value="GDP_dissociation_inhibitor"/>
</dbReference>
<dbReference type="InterPro" id="IPR000806">
    <property type="entry name" value="RabGDI"/>
</dbReference>
<dbReference type="PANTHER" id="PTHR11787:SF19">
    <property type="entry name" value="GUANOSINE NUCLEOTIDE DIPHOSPHATE DISSOCIATION INHIBITOR 2"/>
    <property type="match status" value="1"/>
</dbReference>
<dbReference type="PANTHER" id="PTHR11787">
    <property type="entry name" value="RAB GDP-DISSOCIATION INHIBITOR"/>
    <property type="match status" value="1"/>
</dbReference>
<dbReference type="Pfam" id="PF00996">
    <property type="entry name" value="GDI"/>
    <property type="match status" value="1"/>
</dbReference>
<dbReference type="PRINTS" id="PR00892">
    <property type="entry name" value="RABGDI"/>
</dbReference>
<dbReference type="PRINTS" id="PR00891">
    <property type="entry name" value="RABGDIREP"/>
</dbReference>
<dbReference type="SUPFAM" id="SSF51905">
    <property type="entry name" value="FAD/NAD(P)-binding domain"/>
    <property type="match status" value="2"/>
</dbReference>